<reference key="1">
    <citation type="journal article" date="2004" name="Proc. Natl. Acad. Sci. U.S.A.">
        <title>Complete genomes of two clinical Staphylococcus aureus strains: evidence for the rapid evolution of virulence and drug resistance.</title>
        <authorList>
            <person name="Holden M.T.G."/>
            <person name="Feil E.J."/>
            <person name="Lindsay J.A."/>
            <person name="Peacock S.J."/>
            <person name="Day N.P.J."/>
            <person name="Enright M.C."/>
            <person name="Foster T.J."/>
            <person name="Moore C.E."/>
            <person name="Hurst L."/>
            <person name="Atkin R."/>
            <person name="Barron A."/>
            <person name="Bason N."/>
            <person name="Bentley S.D."/>
            <person name="Chillingworth C."/>
            <person name="Chillingworth T."/>
            <person name="Churcher C."/>
            <person name="Clark L."/>
            <person name="Corton C."/>
            <person name="Cronin A."/>
            <person name="Doggett J."/>
            <person name="Dowd L."/>
            <person name="Feltwell T."/>
            <person name="Hance Z."/>
            <person name="Harris B."/>
            <person name="Hauser H."/>
            <person name="Holroyd S."/>
            <person name="Jagels K."/>
            <person name="James K.D."/>
            <person name="Lennard N."/>
            <person name="Line A."/>
            <person name="Mayes R."/>
            <person name="Moule S."/>
            <person name="Mungall K."/>
            <person name="Ormond D."/>
            <person name="Quail M.A."/>
            <person name="Rabbinowitsch E."/>
            <person name="Rutherford K.M."/>
            <person name="Sanders M."/>
            <person name="Sharp S."/>
            <person name="Simmonds M."/>
            <person name="Stevens K."/>
            <person name="Whitehead S."/>
            <person name="Barrell B.G."/>
            <person name="Spratt B.G."/>
            <person name="Parkhill J."/>
        </authorList>
    </citation>
    <scope>NUCLEOTIDE SEQUENCE [LARGE SCALE GENOMIC DNA]</scope>
    <source>
        <strain>MSSA476</strain>
    </source>
</reference>
<name>HUTI_STAAS</name>
<proteinExistence type="inferred from homology"/>
<comment type="function">
    <text evidence="1">Catalyzes the hydrolytic cleavage of the carbon-nitrogen bond in imidazolone-5-propanoate to yield N-formimidoyl-L-glutamate. It is the third step in the universal histidine degradation pathway.</text>
</comment>
<comment type="catalytic activity">
    <reaction evidence="1">
        <text>4-imidazolone-5-propanoate + H2O = N-formimidoyl-L-glutamate</text>
        <dbReference type="Rhea" id="RHEA:23660"/>
        <dbReference type="ChEBI" id="CHEBI:15377"/>
        <dbReference type="ChEBI" id="CHEBI:58928"/>
        <dbReference type="ChEBI" id="CHEBI:77893"/>
        <dbReference type="EC" id="3.5.2.7"/>
    </reaction>
</comment>
<comment type="cofactor">
    <cofactor evidence="1">
        <name>Zn(2+)</name>
        <dbReference type="ChEBI" id="CHEBI:29105"/>
    </cofactor>
    <cofactor evidence="1">
        <name>Fe(3+)</name>
        <dbReference type="ChEBI" id="CHEBI:29034"/>
    </cofactor>
    <text evidence="1">Binds 1 zinc or iron ion per subunit.</text>
</comment>
<comment type="pathway">
    <text evidence="1">Amino-acid degradation; L-histidine degradation into L-glutamate; N-formimidoyl-L-glutamate from L-histidine: step 3/3.</text>
</comment>
<comment type="subcellular location">
    <subcellularLocation>
        <location evidence="1">Cytoplasm</location>
    </subcellularLocation>
</comment>
<comment type="similarity">
    <text evidence="1">Belongs to the metallo-dependent hydrolases superfamily. HutI family.</text>
</comment>
<evidence type="ECO:0000255" key="1">
    <source>
        <dbReference type="HAMAP-Rule" id="MF_00372"/>
    </source>
</evidence>
<gene>
    <name evidence="1" type="primary">hutI</name>
    <name type="ordered locus">SAS2223</name>
</gene>
<accession>Q6G6Z0</accession>
<organism>
    <name type="scientific">Staphylococcus aureus (strain MSSA476)</name>
    <dbReference type="NCBI Taxonomy" id="282459"/>
    <lineage>
        <taxon>Bacteria</taxon>
        <taxon>Bacillati</taxon>
        <taxon>Bacillota</taxon>
        <taxon>Bacilli</taxon>
        <taxon>Bacillales</taxon>
        <taxon>Staphylococcaceae</taxon>
        <taxon>Staphylococcus</taxon>
    </lineage>
</organism>
<dbReference type="EC" id="3.5.2.7" evidence="1"/>
<dbReference type="EMBL" id="BX571857">
    <property type="protein sequence ID" value="CAG44034.1"/>
    <property type="molecule type" value="Genomic_DNA"/>
</dbReference>
<dbReference type="RefSeq" id="WP_000998766.1">
    <property type="nucleotide sequence ID" value="NC_002953.3"/>
</dbReference>
<dbReference type="SMR" id="Q6G6Z0"/>
<dbReference type="KEGG" id="sas:SAS2223"/>
<dbReference type="HOGENOM" id="CLU_041647_0_1_9"/>
<dbReference type="UniPathway" id="UPA00379">
    <property type="reaction ID" value="UER00551"/>
</dbReference>
<dbReference type="GO" id="GO:0005737">
    <property type="term" value="C:cytoplasm"/>
    <property type="evidence" value="ECO:0007669"/>
    <property type="project" value="UniProtKB-SubCell"/>
</dbReference>
<dbReference type="GO" id="GO:0050480">
    <property type="term" value="F:imidazolonepropionase activity"/>
    <property type="evidence" value="ECO:0007669"/>
    <property type="project" value="UniProtKB-UniRule"/>
</dbReference>
<dbReference type="GO" id="GO:0005506">
    <property type="term" value="F:iron ion binding"/>
    <property type="evidence" value="ECO:0007669"/>
    <property type="project" value="UniProtKB-UniRule"/>
</dbReference>
<dbReference type="GO" id="GO:0008270">
    <property type="term" value="F:zinc ion binding"/>
    <property type="evidence" value="ECO:0007669"/>
    <property type="project" value="UniProtKB-UniRule"/>
</dbReference>
<dbReference type="GO" id="GO:0019556">
    <property type="term" value="P:L-histidine catabolic process to glutamate and formamide"/>
    <property type="evidence" value="ECO:0007669"/>
    <property type="project" value="UniProtKB-UniPathway"/>
</dbReference>
<dbReference type="GO" id="GO:0019557">
    <property type="term" value="P:L-histidine catabolic process to glutamate and formate"/>
    <property type="evidence" value="ECO:0007669"/>
    <property type="project" value="UniProtKB-UniPathway"/>
</dbReference>
<dbReference type="CDD" id="cd01296">
    <property type="entry name" value="Imidazolone-5PH"/>
    <property type="match status" value="1"/>
</dbReference>
<dbReference type="FunFam" id="3.20.20.140:FF:000007">
    <property type="entry name" value="Imidazolonepropionase"/>
    <property type="match status" value="1"/>
</dbReference>
<dbReference type="Gene3D" id="3.20.20.140">
    <property type="entry name" value="Metal-dependent hydrolases"/>
    <property type="match status" value="1"/>
</dbReference>
<dbReference type="Gene3D" id="2.30.40.10">
    <property type="entry name" value="Urease, subunit C, domain 1"/>
    <property type="match status" value="1"/>
</dbReference>
<dbReference type="HAMAP" id="MF_00372">
    <property type="entry name" value="HutI"/>
    <property type="match status" value="1"/>
</dbReference>
<dbReference type="InterPro" id="IPR006680">
    <property type="entry name" value="Amidohydro-rel"/>
</dbReference>
<dbReference type="InterPro" id="IPR005920">
    <property type="entry name" value="HutI"/>
</dbReference>
<dbReference type="InterPro" id="IPR011059">
    <property type="entry name" value="Metal-dep_hydrolase_composite"/>
</dbReference>
<dbReference type="InterPro" id="IPR032466">
    <property type="entry name" value="Metal_Hydrolase"/>
</dbReference>
<dbReference type="NCBIfam" id="TIGR01224">
    <property type="entry name" value="hutI"/>
    <property type="match status" value="1"/>
</dbReference>
<dbReference type="PANTHER" id="PTHR42752">
    <property type="entry name" value="IMIDAZOLONEPROPIONASE"/>
    <property type="match status" value="1"/>
</dbReference>
<dbReference type="PANTHER" id="PTHR42752:SF1">
    <property type="entry name" value="IMIDAZOLONEPROPIONASE-RELATED"/>
    <property type="match status" value="1"/>
</dbReference>
<dbReference type="Pfam" id="PF01979">
    <property type="entry name" value="Amidohydro_1"/>
    <property type="match status" value="1"/>
</dbReference>
<dbReference type="SUPFAM" id="SSF51338">
    <property type="entry name" value="Composite domain of metallo-dependent hydrolases"/>
    <property type="match status" value="1"/>
</dbReference>
<dbReference type="SUPFAM" id="SSF51556">
    <property type="entry name" value="Metallo-dependent hydrolases"/>
    <property type="match status" value="1"/>
</dbReference>
<protein>
    <recommendedName>
        <fullName evidence="1">Imidazolonepropionase</fullName>
        <ecNumber evidence="1">3.5.2.7</ecNumber>
    </recommendedName>
    <alternativeName>
        <fullName evidence="1">Imidazolone-5-propionate hydrolase</fullName>
    </alternativeName>
</protein>
<feature type="chain" id="PRO_0000160962" description="Imidazolonepropionase">
    <location>
        <begin position="1"/>
        <end position="412"/>
    </location>
</feature>
<feature type="binding site" evidence="1">
    <location>
        <position position="76"/>
    </location>
    <ligand>
        <name>Fe(3+)</name>
        <dbReference type="ChEBI" id="CHEBI:29034"/>
    </ligand>
</feature>
<feature type="binding site" evidence="1">
    <location>
        <position position="76"/>
    </location>
    <ligand>
        <name>Zn(2+)</name>
        <dbReference type="ChEBI" id="CHEBI:29105"/>
    </ligand>
</feature>
<feature type="binding site" evidence="1">
    <location>
        <position position="78"/>
    </location>
    <ligand>
        <name>Fe(3+)</name>
        <dbReference type="ChEBI" id="CHEBI:29034"/>
    </ligand>
</feature>
<feature type="binding site" evidence="1">
    <location>
        <position position="78"/>
    </location>
    <ligand>
        <name>Zn(2+)</name>
        <dbReference type="ChEBI" id="CHEBI:29105"/>
    </ligand>
</feature>
<feature type="binding site" evidence="1">
    <location>
        <position position="85"/>
    </location>
    <ligand>
        <name>4-imidazolone-5-propanoate</name>
        <dbReference type="ChEBI" id="CHEBI:77893"/>
    </ligand>
</feature>
<feature type="binding site" evidence="1">
    <location>
        <position position="148"/>
    </location>
    <ligand>
        <name>4-imidazolone-5-propanoate</name>
        <dbReference type="ChEBI" id="CHEBI:77893"/>
    </ligand>
</feature>
<feature type="binding site" evidence="1">
    <location>
        <position position="148"/>
    </location>
    <ligand>
        <name>N-formimidoyl-L-glutamate</name>
        <dbReference type="ChEBI" id="CHEBI:58928"/>
    </ligand>
</feature>
<feature type="binding site" evidence="1">
    <location>
        <position position="181"/>
    </location>
    <ligand>
        <name>4-imidazolone-5-propanoate</name>
        <dbReference type="ChEBI" id="CHEBI:77893"/>
    </ligand>
</feature>
<feature type="binding site" evidence="1">
    <location>
        <position position="242"/>
    </location>
    <ligand>
        <name>Fe(3+)</name>
        <dbReference type="ChEBI" id="CHEBI:29034"/>
    </ligand>
</feature>
<feature type="binding site" evidence="1">
    <location>
        <position position="242"/>
    </location>
    <ligand>
        <name>Zn(2+)</name>
        <dbReference type="ChEBI" id="CHEBI:29105"/>
    </ligand>
</feature>
<feature type="binding site" evidence="1">
    <location>
        <position position="245"/>
    </location>
    <ligand>
        <name>4-imidazolone-5-propanoate</name>
        <dbReference type="ChEBI" id="CHEBI:77893"/>
    </ligand>
</feature>
<feature type="binding site" evidence="1">
    <location>
        <position position="317"/>
    </location>
    <ligand>
        <name>Fe(3+)</name>
        <dbReference type="ChEBI" id="CHEBI:29034"/>
    </ligand>
</feature>
<feature type="binding site" evidence="1">
    <location>
        <position position="317"/>
    </location>
    <ligand>
        <name>Zn(2+)</name>
        <dbReference type="ChEBI" id="CHEBI:29105"/>
    </ligand>
</feature>
<feature type="binding site" evidence="1">
    <location>
        <position position="319"/>
    </location>
    <ligand>
        <name>N-formimidoyl-L-glutamate</name>
        <dbReference type="ChEBI" id="CHEBI:58928"/>
    </ligand>
</feature>
<feature type="binding site" evidence="1">
    <location>
        <position position="321"/>
    </location>
    <ligand>
        <name>N-formimidoyl-L-glutamate</name>
        <dbReference type="ChEBI" id="CHEBI:58928"/>
    </ligand>
</feature>
<feature type="binding site" evidence="1">
    <location>
        <position position="322"/>
    </location>
    <ligand>
        <name>4-imidazolone-5-propanoate</name>
        <dbReference type="ChEBI" id="CHEBI:77893"/>
    </ligand>
</feature>
<keyword id="KW-0963">Cytoplasm</keyword>
<keyword id="KW-0369">Histidine metabolism</keyword>
<keyword id="KW-0378">Hydrolase</keyword>
<keyword id="KW-0408">Iron</keyword>
<keyword id="KW-0479">Metal-binding</keyword>
<keyword id="KW-0862">Zinc</keyword>
<sequence>MNDLIINHIAELILPRSTDKPLKGKELDELNVVKNGTVVIKDGKIVYAGTHTDDYDATETIDASGKVVSPALVDAHTHLTFGGSREHEMSLKRQGKSYLEILEMGGGILSTVNATRETSEDDLFKKAEHDLLTMIKHGVLAVESKSGYGLDRENELKQLKVSNRLAEKYDLDMKHTFLGPHAVPKEASSNEAFLEEMIALLPEVKQYADFADIFCETGVFTIEQSQHYMQKAKEAGFKVKIHADEIDPLGGLELAIDEQAISADHLVASSDKGKEKLRNSDTVAVLLPATTFYLGKEDYADARGMLDNNGAIALATDYNPGSSVTNNLQLVMAIAALKLKLSPNEVWNAVTVNAAKAIDINAGTINTGDKANLVIWDAPNHEYIPYHFGINHAEKVIKDGKVIVDNTLSFKA</sequence>